<dbReference type="EC" id="3.1.3.5" evidence="1"/>
<dbReference type="EMBL" id="CP001339">
    <property type="protein sequence ID" value="ACL72517.1"/>
    <property type="molecule type" value="Genomic_DNA"/>
</dbReference>
<dbReference type="RefSeq" id="WP_012638000.1">
    <property type="nucleotide sequence ID" value="NC_011901.1"/>
</dbReference>
<dbReference type="SMR" id="B8GRG3"/>
<dbReference type="STRING" id="396588.Tgr7_1432"/>
<dbReference type="KEGG" id="tgr:Tgr7_1432"/>
<dbReference type="eggNOG" id="COG0496">
    <property type="taxonomic scope" value="Bacteria"/>
</dbReference>
<dbReference type="HOGENOM" id="CLU_045192_1_2_6"/>
<dbReference type="OrthoDB" id="9780815at2"/>
<dbReference type="Proteomes" id="UP000002383">
    <property type="component" value="Chromosome"/>
</dbReference>
<dbReference type="GO" id="GO:0005737">
    <property type="term" value="C:cytoplasm"/>
    <property type="evidence" value="ECO:0007669"/>
    <property type="project" value="UniProtKB-SubCell"/>
</dbReference>
<dbReference type="GO" id="GO:0008254">
    <property type="term" value="F:3'-nucleotidase activity"/>
    <property type="evidence" value="ECO:0007669"/>
    <property type="project" value="TreeGrafter"/>
</dbReference>
<dbReference type="GO" id="GO:0008253">
    <property type="term" value="F:5'-nucleotidase activity"/>
    <property type="evidence" value="ECO:0007669"/>
    <property type="project" value="UniProtKB-UniRule"/>
</dbReference>
<dbReference type="GO" id="GO:0004309">
    <property type="term" value="F:exopolyphosphatase activity"/>
    <property type="evidence" value="ECO:0007669"/>
    <property type="project" value="TreeGrafter"/>
</dbReference>
<dbReference type="GO" id="GO:0046872">
    <property type="term" value="F:metal ion binding"/>
    <property type="evidence" value="ECO:0007669"/>
    <property type="project" value="UniProtKB-UniRule"/>
</dbReference>
<dbReference type="GO" id="GO:0000166">
    <property type="term" value="F:nucleotide binding"/>
    <property type="evidence" value="ECO:0007669"/>
    <property type="project" value="UniProtKB-KW"/>
</dbReference>
<dbReference type="FunFam" id="3.40.1210.10:FF:000001">
    <property type="entry name" value="5'/3'-nucleotidase SurE"/>
    <property type="match status" value="1"/>
</dbReference>
<dbReference type="Gene3D" id="3.40.1210.10">
    <property type="entry name" value="Survival protein SurE-like phosphatase/nucleotidase"/>
    <property type="match status" value="1"/>
</dbReference>
<dbReference type="HAMAP" id="MF_00060">
    <property type="entry name" value="SurE"/>
    <property type="match status" value="1"/>
</dbReference>
<dbReference type="InterPro" id="IPR030048">
    <property type="entry name" value="SurE"/>
</dbReference>
<dbReference type="InterPro" id="IPR002828">
    <property type="entry name" value="SurE-like_Pase/nucleotidase"/>
</dbReference>
<dbReference type="InterPro" id="IPR036523">
    <property type="entry name" value="SurE-like_sf"/>
</dbReference>
<dbReference type="NCBIfam" id="NF001489">
    <property type="entry name" value="PRK00346.1-3"/>
    <property type="match status" value="1"/>
</dbReference>
<dbReference type="NCBIfam" id="NF001490">
    <property type="entry name" value="PRK00346.1-4"/>
    <property type="match status" value="1"/>
</dbReference>
<dbReference type="NCBIfam" id="TIGR00087">
    <property type="entry name" value="surE"/>
    <property type="match status" value="1"/>
</dbReference>
<dbReference type="PANTHER" id="PTHR30457">
    <property type="entry name" value="5'-NUCLEOTIDASE SURE"/>
    <property type="match status" value="1"/>
</dbReference>
<dbReference type="PANTHER" id="PTHR30457:SF12">
    <property type="entry name" value="5'_3'-NUCLEOTIDASE SURE"/>
    <property type="match status" value="1"/>
</dbReference>
<dbReference type="Pfam" id="PF01975">
    <property type="entry name" value="SurE"/>
    <property type="match status" value="1"/>
</dbReference>
<dbReference type="SUPFAM" id="SSF64167">
    <property type="entry name" value="SurE-like"/>
    <property type="match status" value="1"/>
</dbReference>
<proteinExistence type="inferred from homology"/>
<organism>
    <name type="scientific">Thioalkalivibrio sulfidiphilus (strain HL-EbGR7)</name>
    <dbReference type="NCBI Taxonomy" id="396588"/>
    <lineage>
        <taxon>Bacteria</taxon>
        <taxon>Pseudomonadati</taxon>
        <taxon>Pseudomonadota</taxon>
        <taxon>Gammaproteobacteria</taxon>
        <taxon>Chromatiales</taxon>
        <taxon>Ectothiorhodospiraceae</taxon>
        <taxon>Thioalkalivibrio</taxon>
    </lineage>
</organism>
<reference key="1">
    <citation type="journal article" date="2011" name="Stand. Genomic Sci.">
        <title>Complete genome sequence of 'Thioalkalivibrio sulfidophilus' HL-EbGr7.</title>
        <authorList>
            <person name="Muyzer G."/>
            <person name="Sorokin D.Y."/>
            <person name="Mavromatis K."/>
            <person name="Lapidus A."/>
            <person name="Clum A."/>
            <person name="Ivanova N."/>
            <person name="Pati A."/>
            <person name="d'Haeseleer P."/>
            <person name="Woyke T."/>
            <person name="Kyrpides N.C."/>
        </authorList>
    </citation>
    <scope>NUCLEOTIDE SEQUENCE [LARGE SCALE GENOMIC DNA]</scope>
    <source>
        <strain>HL-EbGR7</strain>
    </source>
</reference>
<comment type="function">
    <text evidence="1">Nucleotidase that shows phosphatase activity on nucleoside 5'-monophosphates.</text>
</comment>
<comment type="catalytic activity">
    <reaction evidence="1">
        <text>a ribonucleoside 5'-phosphate + H2O = a ribonucleoside + phosphate</text>
        <dbReference type="Rhea" id="RHEA:12484"/>
        <dbReference type="ChEBI" id="CHEBI:15377"/>
        <dbReference type="ChEBI" id="CHEBI:18254"/>
        <dbReference type="ChEBI" id="CHEBI:43474"/>
        <dbReference type="ChEBI" id="CHEBI:58043"/>
        <dbReference type="EC" id="3.1.3.5"/>
    </reaction>
</comment>
<comment type="cofactor">
    <cofactor evidence="1">
        <name>a divalent metal cation</name>
        <dbReference type="ChEBI" id="CHEBI:60240"/>
    </cofactor>
    <text evidence="1">Binds 1 divalent metal cation per subunit.</text>
</comment>
<comment type="subcellular location">
    <subcellularLocation>
        <location evidence="1">Cytoplasm</location>
    </subcellularLocation>
</comment>
<comment type="similarity">
    <text evidence="1">Belongs to the SurE nucleotidase family.</text>
</comment>
<sequence>MRILLSNDDGVHAPGLQCLAAALRTVAEVHVVAPDRDRSGASNSLTLARPLRAMRLDNGDVRVDGTPTDCVHLAITGLMEEEPDMVISGINSGANMGDDVLYSGTVAAAMEGRFLGLPAIAVSINSHEGKHYDSAARAVLDLLKRLGHMPLPANTILNVNVPHLPWSEIQGVQATRLGHRHKSEPMIRSHDPRGRPIYWVGAAGPEQDAGPGTDFHAVRSGYVSVTPIQVDLTRYDAIDTVANWLRDEDPA</sequence>
<evidence type="ECO:0000255" key="1">
    <source>
        <dbReference type="HAMAP-Rule" id="MF_00060"/>
    </source>
</evidence>
<protein>
    <recommendedName>
        <fullName evidence="1">5'-nucleotidase SurE</fullName>
        <ecNumber evidence="1">3.1.3.5</ecNumber>
    </recommendedName>
    <alternativeName>
        <fullName evidence="1">Nucleoside 5'-monophosphate phosphohydrolase</fullName>
    </alternativeName>
</protein>
<accession>B8GRG3</accession>
<gene>
    <name evidence="1" type="primary">surE</name>
    <name type="ordered locus">Tgr7_1432</name>
</gene>
<name>SURE_THISH</name>
<keyword id="KW-0963">Cytoplasm</keyword>
<keyword id="KW-0378">Hydrolase</keyword>
<keyword id="KW-0479">Metal-binding</keyword>
<keyword id="KW-0547">Nucleotide-binding</keyword>
<keyword id="KW-1185">Reference proteome</keyword>
<feature type="chain" id="PRO_1000196618" description="5'-nucleotidase SurE">
    <location>
        <begin position="1"/>
        <end position="251"/>
    </location>
</feature>
<feature type="binding site" evidence="1">
    <location>
        <position position="8"/>
    </location>
    <ligand>
        <name>a divalent metal cation</name>
        <dbReference type="ChEBI" id="CHEBI:60240"/>
    </ligand>
</feature>
<feature type="binding site" evidence="1">
    <location>
        <position position="9"/>
    </location>
    <ligand>
        <name>a divalent metal cation</name>
        <dbReference type="ChEBI" id="CHEBI:60240"/>
    </ligand>
</feature>
<feature type="binding site" evidence="1">
    <location>
        <position position="39"/>
    </location>
    <ligand>
        <name>a divalent metal cation</name>
        <dbReference type="ChEBI" id="CHEBI:60240"/>
    </ligand>
</feature>
<feature type="binding site" evidence="1">
    <location>
        <position position="91"/>
    </location>
    <ligand>
        <name>a divalent metal cation</name>
        <dbReference type="ChEBI" id="CHEBI:60240"/>
    </ligand>
</feature>